<keyword id="KW-0963">Cytoplasm</keyword>
<keyword id="KW-0229">DNA integration</keyword>
<keyword id="KW-0233">DNA recombination</keyword>
<keyword id="KW-0238">DNA-binding</keyword>
<keyword id="KW-1185">Reference proteome</keyword>
<proteinExistence type="inferred from homology"/>
<sequence>MRDRISAFLEEKQGLSVNSKQSYKYDLEQFLDMVGERISETSLKIYQAQLANLKISAQKRKISACNQFLYFLYQKGEVDSFYRLELAKQAEKKTEKPEILYLDSFWQESDHPEGRLLALLILEMGLLPSEILAIKVADINLDFQVLRISKASQQRIVTIPTALLSELEPLMGQTYLFERGEKPYSRQWAFRQLESFVKEKGFPSLSAQVLREQFILRQIENKVDLYEIAKKLGLKTVLTLEKYR</sequence>
<feature type="chain" id="PRO_0000095441" description="Tyrosine recombinase XerD-like">
    <location>
        <begin position="1"/>
        <end position="244"/>
    </location>
</feature>
<feature type="domain" description="Core-binding (CB)" evidence="3">
    <location>
        <begin position="1"/>
        <end position="73"/>
    </location>
</feature>
<feature type="domain" description="Tyr recombinase" evidence="2">
    <location>
        <begin position="90"/>
        <end position="244"/>
    </location>
</feature>
<feature type="active site" evidence="2">
    <location>
        <position position="150"/>
    </location>
</feature>
<feature type="active site" evidence="2">
    <location>
        <position position="211"/>
    </location>
</feature>
<feature type="active site" description="O-(3'-phospho-DNA)-tyrosine intermediate" evidence="2">
    <location>
        <position position="243"/>
    </location>
</feature>
<gene>
    <name type="primary">xerD</name>
    <name type="ordered locus">spr1692</name>
</gene>
<evidence type="ECO:0000255" key="1">
    <source>
        <dbReference type="HAMAP-Rule" id="MF_01817"/>
    </source>
</evidence>
<evidence type="ECO:0000255" key="2">
    <source>
        <dbReference type="PROSITE-ProRule" id="PRU01246"/>
    </source>
</evidence>
<evidence type="ECO:0000255" key="3">
    <source>
        <dbReference type="PROSITE-ProRule" id="PRU01248"/>
    </source>
</evidence>
<evidence type="ECO:0000269" key="4">
    <source>
    </source>
</evidence>
<evidence type="ECO:0000305" key="5"/>
<organism>
    <name type="scientific">Streptococcus pneumoniae (strain ATCC BAA-255 / R6)</name>
    <dbReference type="NCBI Taxonomy" id="171101"/>
    <lineage>
        <taxon>Bacteria</taxon>
        <taxon>Bacillati</taxon>
        <taxon>Bacillota</taxon>
        <taxon>Bacilli</taxon>
        <taxon>Lactobacillales</taxon>
        <taxon>Streptococcaceae</taxon>
        <taxon>Streptococcus</taxon>
    </lineage>
</organism>
<dbReference type="EMBL" id="AJ277766">
    <property type="protein sequence ID" value="CAC19448.1"/>
    <property type="status" value="ALT_INIT"/>
    <property type="molecule type" value="Genomic_DNA"/>
</dbReference>
<dbReference type="EMBL" id="AE007317">
    <property type="protein sequence ID" value="AAL00495.1"/>
    <property type="status" value="ALT_INIT"/>
    <property type="molecule type" value="Genomic_DNA"/>
</dbReference>
<dbReference type="PIR" id="B98083">
    <property type="entry name" value="B98083"/>
</dbReference>
<dbReference type="RefSeq" id="NP_359284.1">
    <property type="nucleotide sequence ID" value="NC_003098.1"/>
</dbReference>
<dbReference type="SMR" id="P0A4T0"/>
<dbReference type="STRING" id="171101.spr1692"/>
<dbReference type="KEGG" id="spr:spr1692"/>
<dbReference type="PATRIC" id="fig|171101.6.peg.1830"/>
<dbReference type="eggNOG" id="COG4974">
    <property type="taxonomic scope" value="Bacteria"/>
</dbReference>
<dbReference type="HOGENOM" id="CLU_1128554_0_0_9"/>
<dbReference type="Proteomes" id="UP000000586">
    <property type="component" value="Chromosome"/>
</dbReference>
<dbReference type="GO" id="GO:0005737">
    <property type="term" value="C:cytoplasm"/>
    <property type="evidence" value="ECO:0007669"/>
    <property type="project" value="UniProtKB-SubCell"/>
</dbReference>
<dbReference type="GO" id="GO:0048476">
    <property type="term" value="C:Holliday junction resolvase complex"/>
    <property type="evidence" value="ECO:0000318"/>
    <property type="project" value="GO_Central"/>
</dbReference>
<dbReference type="GO" id="GO:0003677">
    <property type="term" value="F:DNA binding"/>
    <property type="evidence" value="ECO:0000318"/>
    <property type="project" value="GO_Central"/>
</dbReference>
<dbReference type="GO" id="GO:0009037">
    <property type="term" value="F:tyrosine-based site-specific recombinase activity"/>
    <property type="evidence" value="ECO:0000318"/>
    <property type="project" value="GO_Central"/>
</dbReference>
<dbReference type="GO" id="GO:0007059">
    <property type="term" value="P:chromosome segregation"/>
    <property type="evidence" value="ECO:0000318"/>
    <property type="project" value="GO_Central"/>
</dbReference>
<dbReference type="GO" id="GO:0006310">
    <property type="term" value="P:DNA recombination"/>
    <property type="evidence" value="ECO:0000318"/>
    <property type="project" value="GO_Central"/>
</dbReference>
<dbReference type="GO" id="GO:0006313">
    <property type="term" value="P:DNA transposition"/>
    <property type="evidence" value="ECO:0007669"/>
    <property type="project" value="UniProtKB-UniRule"/>
</dbReference>
<dbReference type="GO" id="GO:0071139">
    <property type="term" value="P:resolution of DNA recombination intermediates"/>
    <property type="evidence" value="ECO:0000318"/>
    <property type="project" value="GO_Central"/>
</dbReference>
<dbReference type="CDD" id="cd01190">
    <property type="entry name" value="INT_StrepXerD_C_like"/>
    <property type="match status" value="1"/>
</dbReference>
<dbReference type="Gene3D" id="1.10.150.130">
    <property type="match status" value="1"/>
</dbReference>
<dbReference type="Gene3D" id="1.10.443.10">
    <property type="entry name" value="Intergrase catalytic core"/>
    <property type="match status" value="1"/>
</dbReference>
<dbReference type="HAMAP" id="MF_01817">
    <property type="entry name" value="Recomb_XerD_like"/>
    <property type="match status" value="1"/>
</dbReference>
<dbReference type="InterPro" id="IPR044068">
    <property type="entry name" value="CB"/>
</dbReference>
<dbReference type="InterPro" id="IPR011010">
    <property type="entry name" value="DNA_brk_join_enz"/>
</dbReference>
<dbReference type="InterPro" id="IPR013762">
    <property type="entry name" value="Integrase-like_cat_sf"/>
</dbReference>
<dbReference type="InterPro" id="IPR002104">
    <property type="entry name" value="Integrase_catalytic"/>
</dbReference>
<dbReference type="InterPro" id="IPR010998">
    <property type="entry name" value="Integrase_recombinase_N"/>
</dbReference>
<dbReference type="InterPro" id="IPR004107">
    <property type="entry name" value="Integrase_SAM-like_N"/>
</dbReference>
<dbReference type="InterPro" id="IPR020876">
    <property type="entry name" value="Tyrosine_recombinase_XerD-like"/>
</dbReference>
<dbReference type="NCBIfam" id="NF002685">
    <property type="entry name" value="PRK02436.1"/>
    <property type="match status" value="1"/>
</dbReference>
<dbReference type="Pfam" id="PF02899">
    <property type="entry name" value="Phage_int_SAM_1"/>
    <property type="match status" value="1"/>
</dbReference>
<dbReference type="Pfam" id="PF00589">
    <property type="entry name" value="Phage_integrase"/>
    <property type="match status" value="1"/>
</dbReference>
<dbReference type="SUPFAM" id="SSF56349">
    <property type="entry name" value="DNA breaking-rejoining enzymes"/>
    <property type="match status" value="1"/>
</dbReference>
<dbReference type="PROSITE" id="PS51900">
    <property type="entry name" value="CB"/>
    <property type="match status" value="1"/>
</dbReference>
<dbReference type="PROSITE" id="PS51898">
    <property type="entry name" value="TYR_RECOMBINASE"/>
    <property type="match status" value="1"/>
</dbReference>
<accession>P0A4T0</accession>
<accession>Q9EUQ8</accession>
<reference key="1">
    <citation type="journal article" date="2002" name="J. Mol. Microbiol. Biotechnol.">
        <title>A XerD recombinase with unusual active site motifs in Streptococcus pneumoniae.</title>
        <authorList>
            <person name="Reichmann P."/>
            <person name="Hakenbeck R."/>
        </authorList>
    </citation>
    <scope>NUCLEOTIDE SEQUENCE [GENOMIC DNA]</scope>
    <scope>DISRUPTION PHENOTYPE</scope>
</reference>
<reference key="2">
    <citation type="journal article" date="2001" name="J. Bacteriol.">
        <title>Genome of the bacterium Streptococcus pneumoniae strain R6.</title>
        <authorList>
            <person name="Hoskins J."/>
            <person name="Alborn W.E. Jr."/>
            <person name="Arnold J."/>
            <person name="Blaszczak L.C."/>
            <person name="Burgett S."/>
            <person name="DeHoff B.S."/>
            <person name="Estrem S.T."/>
            <person name="Fritz L."/>
            <person name="Fu D.-J."/>
            <person name="Fuller W."/>
            <person name="Geringer C."/>
            <person name="Gilmour R."/>
            <person name="Glass J.S."/>
            <person name="Khoja H."/>
            <person name="Kraft A.R."/>
            <person name="Lagace R.E."/>
            <person name="LeBlanc D.J."/>
            <person name="Lee L.N."/>
            <person name="Lefkowitz E.J."/>
            <person name="Lu J."/>
            <person name="Matsushima P."/>
            <person name="McAhren S.M."/>
            <person name="McHenney M."/>
            <person name="McLeaster K."/>
            <person name="Mundy C.W."/>
            <person name="Nicas T.I."/>
            <person name="Norris F.H."/>
            <person name="O'Gara M."/>
            <person name="Peery R.B."/>
            <person name="Robertson G.T."/>
            <person name="Rockey P."/>
            <person name="Sun P.-M."/>
            <person name="Winkler M.E."/>
            <person name="Yang Y."/>
            <person name="Young-Bellido M."/>
            <person name="Zhao G."/>
            <person name="Zook C.A."/>
            <person name="Baltz R.H."/>
            <person name="Jaskunas S.R."/>
            <person name="Rosteck P.R. Jr."/>
            <person name="Skatrud P.L."/>
            <person name="Glass J.I."/>
        </authorList>
    </citation>
    <scope>NUCLEOTIDE SEQUENCE [LARGE SCALE GENOMIC DNA]</scope>
    <source>
        <strain>ATCC BAA-255 / R6</strain>
    </source>
</reference>
<name>XERDL_STRR6</name>
<comment type="function">
    <text evidence="1">Putative tyrosine recombinase. Not involved in the cutting and rejoining of the recombining DNA molecules on dif(SL) site.</text>
</comment>
<comment type="subcellular location">
    <subcellularLocation>
        <location evidence="1">Cytoplasm</location>
    </subcellularLocation>
</comment>
<comment type="disruption phenotype">
    <text evidence="4">Cells display severe growth defects.</text>
</comment>
<comment type="similarity">
    <text evidence="1">Belongs to the 'phage' integrase family. XerD-like subfamily.</text>
</comment>
<comment type="caution">
    <text evidence="5">Although named XerD by PubMed:11763967, it is not the ortholog of XerD and constitutes a distinct protein family. In contrast to the classic XerD protein, it does not contain the Arg-His-Arg-His (R-H-R-H) sandwich residues that are clustered with the Tyr active site. It also lacks the C-terminal region which is known to mediate the interaction with XerC. It is therefore unknown whether it has tyrosine recombinase activity or act as a regulator.</text>
</comment>
<comment type="sequence caution" evidence="5">
    <conflict type="erroneous initiation">
        <sequence resource="EMBL-CDS" id="AAL00495"/>
    </conflict>
</comment>
<comment type="sequence caution" evidence="5">
    <conflict type="erroneous initiation">
        <sequence resource="EMBL-CDS" id="CAC19448"/>
    </conflict>
</comment>
<protein>
    <recommendedName>
        <fullName evidence="1">Tyrosine recombinase XerD-like</fullName>
    </recommendedName>
</protein>